<organism>
    <name type="scientific">Methylobacterium nodulans (strain LMG 21967 / CNCM I-2342 / ORS 2060)</name>
    <dbReference type="NCBI Taxonomy" id="460265"/>
    <lineage>
        <taxon>Bacteria</taxon>
        <taxon>Pseudomonadati</taxon>
        <taxon>Pseudomonadota</taxon>
        <taxon>Alphaproteobacteria</taxon>
        <taxon>Hyphomicrobiales</taxon>
        <taxon>Methylobacteriaceae</taxon>
        <taxon>Methylobacterium</taxon>
    </lineage>
</organism>
<gene>
    <name evidence="1" type="primary">adk</name>
    <name type="ordered locus">Mnod_1929</name>
</gene>
<accession>B8IT32</accession>
<comment type="function">
    <text evidence="1">Catalyzes the reversible transfer of the terminal phosphate group between ATP and AMP. Plays an important role in cellular energy homeostasis and in adenine nucleotide metabolism.</text>
</comment>
<comment type="catalytic activity">
    <reaction evidence="1">
        <text>AMP + ATP = 2 ADP</text>
        <dbReference type="Rhea" id="RHEA:12973"/>
        <dbReference type="ChEBI" id="CHEBI:30616"/>
        <dbReference type="ChEBI" id="CHEBI:456215"/>
        <dbReference type="ChEBI" id="CHEBI:456216"/>
        <dbReference type="EC" id="2.7.4.3"/>
    </reaction>
</comment>
<comment type="pathway">
    <text evidence="1">Purine metabolism; AMP biosynthesis via salvage pathway; AMP from ADP: step 1/1.</text>
</comment>
<comment type="subunit">
    <text evidence="1">Monomer.</text>
</comment>
<comment type="subcellular location">
    <subcellularLocation>
        <location evidence="1">Cytoplasm</location>
    </subcellularLocation>
</comment>
<comment type="domain">
    <text evidence="1">Consists of three domains, a large central CORE domain and two small peripheral domains, NMPbind and LID, which undergo movements during catalysis. The LID domain closes over the site of phosphoryl transfer upon ATP binding. Assembling and dissambling the active center during each catalytic cycle provides an effective means to prevent ATP hydrolysis.</text>
</comment>
<comment type="similarity">
    <text evidence="1">Belongs to the adenylate kinase family.</text>
</comment>
<keyword id="KW-0067">ATP-binding</keyword>
<keyword id="KW-0963">Cytoplasm</keyword>
<keyword id="KW-0418">Kinase</keyword>
<keyword id="KW-0545">Nucleotide biosynthesis</keyword>
<keyword id="KW-0547">Nucleotide-binding</keyword>
<keyword id="KW-1185">Reference proteome</keyword>
<keyword id="KW-0808">Transferase</keyword>
<proteinExistence type="inferred from homology"/>
<name>KAD_METNO</name>
<sequence>MRIILLGPPGAGKGTQSARIVEQFGIPQLSTGDMLRAAVAARTPVGLQAKSIMESGGLVPDEVVVGIVADRIDEADARKGFILDGFPRTVAQAKALDAMLAAKGLSLDAVIEFRVDEEALLGRIAKRAAETLARGEAVRKDDTPEVFKTRLDAYRSQTAPVSDYYAQTGLLRPIDGMAPIDDVSRAVEVLLRGLQPVSA</sequence>
<feature type="chain" id="PRO_1000191154" description="Adenylate kinase">
    <location>
        <begin position="1"/>
        <end position="199"/>
    </location>
</feature>
<feature type="region of interest" description="NMP" evidence="1">
    <location>
        <begin position="30"/>
        <end position="59"/>
    </location>
</feature>
<feature type="region of interest" description="LID" evidence="1">
    <location>
        <begin position="126"/>
        <end position="142"/>
    </location>
</feature>
<feature type="binding site" evidence="1">
    <location>
        <begin position="10"/>
        <end position="15"/>
    </location>
    <ligand>
        <name>ATP</name>
        <dbReference type="ChEBI" id="CHEBI:30616"/>
    </ligand>
</feature>
<feature type="binding site" evidence="1">
    <location>
        <position position="31"/>
    </location>
    <ligand>
        <name>AMP</name>
        <dbReference type="ChEBI" id="CHEBI:456215"/>
    </ligand>
</feature>
<feature type="binding site" evidence="1">
    <location>
        <position position="36"/>
    </location>
    <ligand>
        <name>AMP</name>
        <dbReference type="ChEBI" id="CHEBI:456215"/>
    </ligand>
</feature>
<feature type="binding site" evidence="1">
    <location>
        <begin position="57"/>
        <end position="59"/>
    </location>
    <ligand>
        <name>AMP</name>
        <dbReference type="ChEBI" id="CHEBI:456215"/>
    </ligand>
</feature>
<feature type="binding site" evidence="1">
    <location>
        <begin position="85"/>
        <end position="88"/>
    </location>
    <ligand>
        <name>AMP</name>
        <dbReference type="ChEBI" id="CHEBI:456215"/>
    </ligand>
</feature>
<feature type="binding site" evidence="1">
    <location>
        <position position="92"/>
    </location>
    <ligand>
        <name>AMP</name>
        <dbReference type="ChEBI" id="CHEBI:456215"/>
    </ligand>
</feature>
<feature type="binding site" evidence="1">
    <location>
        <position position="127"/>
    </location>
    <ligand>
        <name>ATP</name>
        <dbReference type="ChEBI" id="CHEBI:30616"/>
    </ligand>
</feature>
<feature type="binding site" evidence="1">
    <location>
        <position position="139"/>
    </location>
    <ligand>
        <name>AMP</name>
        <dbReference type="ChEBI" id="CHEBI:456215"/>
    </ligand>
</feature>
<feature type="binding site" evidence="1">
    <location>
        <position position="150"/>
    </location>
    <ligand>
        <name>AMP</name>
        <dbReference type="ChEBI" id="CHEBI:456215"/>
    </ligand>
</feature>
<feature type="binding site" evidence="1">
    <location>
        <position position="178"/>
    </location>
    <ligand>
        <name>ATP</name>
        <dbReference type="ChEBI" id="CHEBI:30616"/>
    </ligand>
</feature>
<dbReference type="EC" id="2.7.4.3" evidence="1"/>
<dbReference type="EMBL" id="CP001349">
    <property type="protein sequence ID" value="ACL56918.1"/>
    <property type="molecule type" value="Genomic_DNA"/>
</dbReference>
<dbReference type="RefSeq" id="WP_015928607.1">
    <property type="nucleotide sequence ID" value="NC_011894.1"/>
</dbReference>
<dbReference type="SMR" id="B8IT32"/>
<dbReference type="STRING" id="460265.Mnod_1929"/>
<dbReference type="KEGG" id="mno:Mnod_1929"/>
<dbReference type="eggNOG" id="COG0563">
    <property type="taxonomic scope" value="Bacteria"/>
</dbReference>
<dbReference type="HOGENOM" id="CLU_032354_1_2_5"/>
<dbReference type="OrthoDB" id="9805030at2"/>
<dbReference type="UniPathway" id="UPA00588">
    <property type="reaction ID" value="UER00649"/>
</dbReference>
<dbReference type="Proteomes" id="UP000008207">
    <property type="component" value="Chromosome"/>
</dbReference>
<dbReference type="GO" id="GO:0005737">
    <property type="term" value="C:cytoplasm"/>
    <property type="evidence" value="ECO:0007669"/>
    <property type="project" value="UniProtKB-SubCell"/>
</dbReference>
<dbReference type="GO" id="GO:0004017">
    <property type="term" value="F:adenylate kinase activity"/>
    <property type="evidence" value="ECO:0007669"/>
    <property type="project" value="UniProtKB-UniRule"/>
</dbReference>
<dbReference type="GO" id="GO:0005524">
    <property type="term" value="F:ATP binding"/>
    <property type="evidence" value="ECO:0007669"/>
    <property type="project" value="UniProtKB-UniRule"/>
</dbReference>
<dbReference type="GO" id="GO:0044209">
    <property type="term" value="P:AMP salvage"/>
    <property type="evidence" value="ECO:0007669"/>
    <property type="project" value="UniProtKB-UniRule"/>
</dbReference>
<dbReference type="CDD" id="cd01428">
    <property type="entry name" value="ADK"/>
    <property type="match status" value="1"/>
</dbReference>
<dbReference type="Gene3D" id="3.40.50.300">
    <property type="entry name" value="P-loop containing nucleotide triphosphate hydrolases"/>
    <property type="match status" value="1"/>
</dbReference>
<dbReference type="HAMAP" id="MF_00235">
    <property type="entry name" value="Adenylate_kinase_Adk"/>
    <property type="match status" value="1"/>
</dbReference>
<dbReference type="InterPro" id="IPR006259">
    <property type="entry name" value="Adenyl_kin_sub"/>
</dbReference>
<dbReference type="InterPro" id="IPR000850">
    <property type="entry name" value="Adenylat/UMP-CMP_kin"/>
</dbReference>
<dbReference type="InterPro" id="IPR033690">
    <property type="entry name" value="Adenylat_kinase_CS"/>
</dbReference>
<dbReference type="InterPro" id="IPR027417">
    <property type="entry name" value="P-loop_NTPase"/>
</dbReference>
<dbReference type="NCBIfam" id="TIGR01351">
    <property type="entry name" value="adk"/>
    <property type="match status" value="1"/>
</dbReference>
<dbReference type="NCBIfam" id="NF001381">
    <property type="entry name" value="PRK00279.1-3"/>
    <property type="match status" value="1"/>
</dbReference>
<dbReference type="NCBIfam" id="NF011100">
    <property type="entry name" value="PRK14527.1"/>
    <property type="match status" value="1"/>
</dbReference>
<dbReference type="NCBIfam" id="NF011101">
    <property type="entry name" value="PRK14528.1"/>
    <property type="match status" value="1"/>
</dbReference>
<dbReference type="NCBIfam" id="NF011104">
    <property type="entry name" value="PRK14531.1"/>
    <property type="match status" value="1"/>
</dbReference>
<dbReference type="NCBIfam" id="NF011105">
    <property type="entry name" value="PRK14532.1"/>
    <property type="match status" value="1"/>
</dbReference>
<dbReference type="PANTHER" id="PTHR23359">
    <property type="entry name" value="NUCLEOTIDE KINASE"/>
    <property type="match status" value="1"/>
</dbReference>
<dbReference type="Pfam" id="PF00406">
    <property type="entry name" value="ADK"/>
    <property type="match status" value="1"/>
</dbReference>
<dbReference type="PRINTS" id="PR00094">
    <property type="entry name" value="ADENYLTKNASE"/>
</dbReference>
<dbReference type="SUPFAM" id="SSF52540">
    <property type="entry name" value="P-loop containing nucleoside triphosphate hydrolases"/>
    <property type="match status" value="1"/>
</dbReference>
<dbReference type="PROSITE" id="PS00113">
    <property type="entry name" value="ADENYLATE_KINASE"/>
    <property type="match status" value="1"/>
</dbReference>
<evidence type="ECO:0000255" key="1">
    <source>
        <dbReference type="HAMAP-Rule" id="MF_00235"/>
    </source>
</evidence>
<protein>
    <recommendedName>
        <fullName evidence="1">Adenylate kinase</fullName>
        <shortName evidence="1">AK</shortName>
        <ecNumber evidence="1">2.7.4.3</ecNumber>
    </recommendedName>
    <alternativeName>
        <fullName evidence="1">ATP-AMP transphosphorylase</fullName>
    </alternativeName>
    <alternativeName>
        <fullName evidence="1">ATP:AMP phosphotransferase</fullName>
    </alternativeName>
    <alternativeName>
        <fullName evidence="1">Adenylate monophosphate kinase</fullName>
    </alternativeName>
</protein>
<reference key="1">
    <citation type="submission" date="2009-01" db="EMBL/GenBank/DDBJ databases">
        <title>Complete sequence of chromosome of Methylobacterium nodulans ORS 2060.</title>
        <authorList>
            <consortium name="US DOE Joint Genome Institute"/>
            <person name="Lucas S."/>
            <person name="Copeland A."/>
            <person name="Lapidus A."/>
            <person name="Glavina del Rio T."/>
            <person name="Dalin E."/>
            <person name="Tice H."/>
            <person name="Bruce D."/>
            <person name="Goodwin L."/>
            <person name="Pitluck S."/>
            <person name="Sims D."/>
            <person name="Brettin T."/>
            <person name="Detter J.C."/>
            <person name="Han C."/>
            <person name="Larimer F."/>
            <person name="Land M."/>
            <person name="Hauser L."/>
            <person name="Kyrpides N."/>
            <person name="Ivanova N."/>
            <person name="Marx C.J."/>
            <person name="Richardson P."/>
        </authorList>
    </citation>
    <scope>NUCLEOTIDE SEQUENCE [LARGE SCALE GENOMIC DNA]</scope>
    <source>
        <strain>LMG 21967 / CNCM I-2342 / ORS 2060</strain>
    </source>
</reference>